<gene>
    <name type="primary">leuS</name>
    <name type="ORF">DDB_G0285451</name>
</gene>
<comment type="catalytic activity">
    <reaction>
        <text>tRNA(Leu) + L-leucine + ATP = L-leucyl-tRNA(Leu) + AMP + diphosphate</text>
        <dbReference type="Rhea" id="RHEA:11688"/>
        <dbReference type="Rhea" id="RHEA-COMP:9613"/>
        <dbReference type="Rhea" id="RHEA-COMP:9622"/>
        <dbReference type="ChEBI" id="CHEBI:30616"/>
        <dbReference type="ChEBI" id="CHEBI:33019"/>
        <dbReference type="ChEBI" id="CHEBI:57427"/>
        <dbReference type="ChEBI" id="CHEBI:78442"/>
        <dbReference type="ChEBI" id="CHEBI:78494"/>
        <dbReference type="ChEBI" id="CHEBI:456215"/>
        <dbReference type="EC" id="6.1.1.4"/>
    </reaction>
</comment>
<comment type="subcellular location">
    <subcellularLocation>
        <location evidence="1">Cytoplasm</location>
    </subcellularLocation>
</comment>
<comment type="similarity">
    <text evidence="2">Belongs to the class-I aminoacyl-tRNA synthetase family.</text>
</comment>
<evidence type="ECO:0000250" key="1"/>
<evidence type="ECO:0000305" key="2"/>
<feature type="chain" id="PRO_0000328291" description="Leucine--tRNA ligase, cytoplasmic">
    <location>
        <begin position="1"/>
        <end position="1058"/>
    </location>
</feature>
<feature type="short sequence motif" description="'HIGH' region" evidence="1">
    <location>
        <begin position="48"/>
        <end position="58"/>
    </location>
</feature>
<feature type="short sequence motif" description="'KMSKS' region" evidence="1">
    <location>
        <begin position="711"/>
        <end position="715"/>
    </location>
</feature>
<feature type="binding site" evidence="1">
    <location>
        <position position="714"/>
    </location>
    <ligand>
        <name>ATP</name>
        <dbReference type="ChEBI" id="CHEBI:30616"/>
    </ligand>
</feature>
<sequence length="1058" mass="119529">MSTAKLDFVRAYEKEVQNKWESDKQFEIDALDAPDAEHPKYLATFPYPYMNGRLHVGHVFTITKAEFMCQFQRLMGKRVLFPFAFHCTGMPIKACADKLKKEIEQFGCPPVFPVIEEKPIQEVTTAVKEDPLSFKSKKTKAVAKSGGAVYQWKIMQSLGISDEEIPMFADSAYWLNYFPPHCESDLKLLGVGVDWRRSFITTDVNGYYDSFVRWQFESLKALGKVKYGKRYSIWSTIDDQQCADHERAQGEGVGPQNYTLIKLEVVEPIPECLKEIHSQGKKIYLVPGTLRPETMYGQTNCWILPTGKYGAFEMANGDIFVCTERSARNMSYQQMTTGKGEYKCLAKFEGSDILGAALKAPLAINPIVYVLPMLTIDENKGTGVVTSVPSDSPDDYASLQDLKAKAPLRAKFSIKDEWVLPFEVVPIIDIPGYSNESAVRAYKDLGIKSQNDRALLDQAKDLCYQKGFNDGVMSVGPYAGRKVSEVKKIIKDEMVASGQAVDYSEPTSKVVSRSGDECVVALSDQWYINYGDDDIEWKNQTIKQLESMEFYSAETKKKFEIALGWMNQWACSRSFGLGTHLPWDEKFLIESLSDSTIYMAFYTVAHLLQGDVNGSKPGSAGITPKQMTSACWDYVLMGKPYPEGCEVSEEKLKELKKEFTYWYPVDIRVSGADLIQNHLTFFLYTHAAIFEKKFQPKSIRANGFVNLNGEKMSKSTGNFLTLVDSVAKFSADGTRVALADAGDSIEDANFVDQTAVTSLLKLHTQIQWVQETLDSIDKFRSGPLDRIQDTIFESEINNIIVESEKAYQKTNFRDALHLVFFDLQNARDHYKVTTLDQMHKDLVLRFIEVQALLIYPIAPHFAQKLFNMLGKGNILSAGWPKAGAIDYEALKKNNYVQQTIYNFRMKLQVYQKAKLKGKPAGTKAIPDQSTIIVSKSYPKWQQDVLEYLATIYNEDSKSFTKDNNAIAEELLSREEMKPHKKNLMGFVASAIQNVKESGKDALQTSLSFDETSTLTDNIDYICKTLELTSFDVKDFNEIPQASQSKIQPIPGKPQFQFV</sequence>
<dbReference type="EC" id="6.1.1.4"/>
<dbReference type="EMBL" id="AAFI02000079">
    <property type="protein sequence ID" value="EAL64563.1"/>
    <property type="molecule type" value="Genomic_DNA"/>
</dbReference>
<dbReference type="RefSeq" id="XP_638060.1">
    <property type="nucleotide sequence ID" value="XM_632968.1"/>
</dbReference>
<dbReference type="SMR" id="Q54N83"/>
<dbReference type="FunCoup" id="Q54N83">
    <property type="interactions" value="1138"/>
</dbReference>
<dbReference type="STRING" id="44689.Q54N83"/>
<dbReference type="PaxDb" id="44689-DDB0231253"/>
<dbReference type="EnsemblProtists" id="EAL64563">
    <property type="protein sequence ID" value="EAL64563"/>
    <property type="gene ID" value="DDB_G0285451"/>
</dbReference>
<dbReference type="GeneID" id="8625106"/>
<dbReference type="KEGG" id="ddi:DDB_G0285451"/>
<dbReference type="dictyBase" id="DDB_G0285451">
    <property type="gene designation" value="leuS"/>
</dbReference>
<dbReference type="VEuPathDB" id="AmoebaDB:DDB_G0285451"/>
<dbReference type="eggNOG" id="KOG0437">
    <property type="taxonomic scope" value="Eukaryota"/>
</dbReference>
<dbReference type="HOGENOM" id="CLU_004174_1_1_1"/>
<dbReference type="InParanoid" id="Q54N83"/>
<dbReference type="OMA" id="KFIEWQF"/>
<dbReference type="PhylomeDB" id="Q54N83"/>
<dbReference type="Reactome" id="R-DDI-9856649">
    <property type="pathway name" value="Transcriptional and post-translational regulation of MITF-M expression and activity"/>
</dbReference>
<dbReference type="PRO" id="PR:Q54N83"/>
<dbReference type="Proteomes" id="UP000002195">
    <property type="component" value="Chromosome 4"/>
</dbReference>
<dbReference type="GO" id="GO:0005737">
    <property type="term" value="C:cytoplasm"/>
    <property type="evidence" value="ECO:0000250"/>
    <property type="project" value="dictyBase"/>
</dbReference>
<dbReference type="GO" id="GO:0002161">
    <property type="term" value="F:aminoacyl-tRNA deacylase activity"/>
    <property type="evidence" value="ECO:0007669"/>
    <property type="project" value="InterPro"/>
</dbReference>
<dbReference type="GO" id="GO:0005524">
    <property type="term" value="F:ATP binding"/>
    <property type="evidence" value="ECO:0007669"/>
    <property type="project" value="UniProtKB-KW"/>
</dbReference>
<dbReference type="GO" id="GO:0004823">
    <property type="term" value="F:leucine-tRNA ligase activity"/>
    <property type="evidence" value="ECO:0000250"/>
    <property type="project" value="dictyBase"/>
</dbReference>
<dbReference type="GO" id="GO:0006429">
    <property type="term" value="P:leucyl-tRNA aminoacylation"/>
    <property type="evidence" value="ECO:0000250"/>
    <property type="project" value="dictyBase"/>
</dbReference>
<dbReference type="FunFam" id="3.90.740.10:FF:000001">
    <property type="entry name" value="Leucine--tRNA ligase, cytoplasmic"/>
    <property type="match status" value="1"/>
</dbReference>
<dbReference type="Gene3D" id="3.40.50.620">
    <property type="entry name" value="HUPs"/>
    <property type="match status" value="1"/>
</dbReference>
<dbReference type="Gene3D" id="3.90.740.10">
    <property type="entry name" value="Valyl/Leucyl/Isoleucyl-tRNA synthetase, editing domain"/>
    <property type="match status" value="1"/>
</dbReference>
<dbReference type="InterPro" id="IPR001412">
    <property type="entry name" value="aa-tRNA-synth_I_CS"/>
</dbReference>
<dbReference type="InterPro" id="IPR002300">
    <property type="entry name" value="aa-tRNA-synth_Ia"/>
</dbReference>
<dbReference type="InterPro" id="IPR004493">
    <property type="entry name" value="Leu-tRNA-synth_Ia_arc/euk"/>
</dbReference>
<dbReference type="InterPro" id="IPR013155">
    <property type="entry name" value="M/V/L/I-tRNA-synth_anticd-bd"/>
</dbReference>
<dbReference type="InterPro" id="IPR015413">
    <property type="entry name" value="Methionyl/Leucyl_tRNA_Synth"/>
</dbReference>
<dbReference type="InterPro" id="IPR055416">
    <property type="entry name" value="RBD_LARS1"/>
</dbReference>
<dbReference type="InterPro" id="IPR014729">
    <property type="entry name" value="Rossmann-like_a/b/a_fold"/>
</dbReference>
<dbReference type="InterPro" id="IPR009080">
    <property type="entry name" value="tRNAsynth_Ia_anticodon-bd"/>
</dbReference>
<dbReference type="InterPro" id="IPR009008">
    <property type="entry name" value="Val/Leu/Ile-tRNA-synth_edit"/>
</dbReference>
<dbReference type="NCBIfam" id="TIGR00395">
    <property type="entry name" value="leuS_arch"/>
    <property type="match status" value="1"/>
</dbReference>
<dbReference type="PANTHER" id="PTHR45794:SF1">
    <property type="entry name" value="LEUCINE--TRNA LIGASE, CYTOPLASMIC"/>
    <property type="match status" value="1"/>
</dbReference>
<dbReference type="PANTHER" id="PTHR45794">
    <property type="entry name" value="LEUCYL-TRNA SYNTHETASE"/>
    <property type="match status" value="1"/>
</dbReference>
<dbReference type="Pfam" id="PF08264">
    <property type="entry name" value="Anticodon_1"/>
    <property type="match status" value="1"/>
</dbReference>
<dbReference type="Pfam" id="PF24810">
    <property type="entry name" value="RBD_LARS1"/>
    <property type="match status" value="1"/>
</dbReference>
<dbReference type="Pfam" id="PF00133">
    <property type="entry name" value="tRNA-synt_1"/>
    <property type="match status" value="2"/>
</dbReference>
<dbReference type="Pfam" id="PF09334">
    <property type="entry name" value="tRNA-synt_1g"/>
    <property type="match status" value="1"/>
</dbReference>
<dbReference type="SUPFAM" id="SSF47323">
    <property type="entry name" value="Anticodon-binding domain of a subclass of class I aminoacyl-tRNA synthetases"/>
    <property type="match status" value="1"/>
</dbReference>
<dbReference type="SUPFAM" id="SSF52374">
    <property type="entry name" value="Nucleotidylyl transferase"/>
    <property type="match status" value="1"/>
</dbReference>
<dbReference type="SUPFAM" id="SSF50677">
    <property type="entry name" value="ValRS/IleRS/LeuRS editing domain"/>
    <property type="match status" value="1"/>
</dbReference>
<dbReference type="PROSITE" id="PS00178">
    <property type="entry name" value="AA_TRNA_LIGASE_I"/>
    <property type="match status" value="1"/>
</dbReference>
<reference key="1">
    <citation type="journal article" date="2005" name="Nature">
        <title>The genome of the social amoeba Dictyostelium discoideum.</title>
        <authorList>
            <person name="Eichinger L."/>
            <person name="Pachebat J.A."/>
            <person name="Gloeckner G."/>
            <person name="Rajandream M.A."/>
            <person name="Sucgang R."/>
            <person name="Berriman M."/>
            <person name="Song J."/>
            <person name="Olsen R."/>
            <person name="Szafranski K."/>
            <person name="Xu Q."/>
            <person name="Tunggal B."/>
            <person name="Kummerfeld S."/>
            <person name="Madera M."/>
            <person name="Konfortov B.A."/>
            <person name="Rivero F."/>
            <person name="Bankier A.T."/>
            <person name="Lehmann R."/>
            <person name="Hamlin N."/>
            <person name="Davies R."/>
            <person name="Gaudet P."/>
            <person name="Fey P."/>
            <person name="Pilcher K."/>
            <person name="Chen G."/>
            <person name="Saunders D."/>
            <person name="Sodergren E.J."/>
            <person name="Davis P."/>
            <person name="Kerhornou A."/>
            <person name="Nie X."/>
            <person name="Hall N."/>
            <person name="Anjard C."/>
            <person name="Hemphill L."/>
            <person name="Bason N."/>
            <person name="Farbrother P."/>
            <person name="Desany B."/>
            <person name="Just E."/>
            <person name="Morio T."/>
            <person name="Rost R."/>
            <person name="Churcher C.M."/>
            <person name="Cooper J."/>
            <person name="Haydock S."/>
            <person name="van Driessche N."/>
            <person name="Cronin A."/>
            <person name="Goodhead I."/>
            <person name="Muzny D.M."/>
            <person name="Mourier T."/>
            <person name="Pain A."/>
            <person name="Lu M."/>
            <person name="Harper D."/>
            <person name="Lindsay R."/>
            <person name="Hauser H."/>
            <person name="James K.D."/>
            <person name="Quiles M."/>
            <person name="Madan Babu M."/>
            <person name="Saito T."/>
            <person name="Buchrieser C."/>
            <person name="Wardroper A."/>
            <person name="Felder M."/>
            <person name="Thangavelu M."/>
            <person name="Johnson D."/>
            <person name="Knights A."/>
            <person name="Loulseged H."/>
            <person name="Mungall K.L."/>
            <person name="Oliver K."/>
            <person name="Price C."/>
            <person name="Quail M.A."/>
            <person name="Urushihara H."/>
            <person name="Hernandez J."/>
            <person name="Rabbinowitsch E."/>
            <person name="Steffen D."/>
            <person name="Sanders M."/>
            <person name="Ma J."/>
            <person name="Kohara Y."/>
            <person name="Sharp S."/>
            <person name="Simmonds M.N."/>
            <person name="Spiegler S."/>
            <person name="Tivey A."/>
            <person name="Sugano S."/>
            <person name="White B."/>
            <person name="Walker D."/>
            <person name="Woodward J.R."/>
            <person name="Winckler T."/>
            <person name="Tanaka Y."/>
            <person name="Shaulsky G."/>
            <person name="Schleicher M."/>
            <person name="Weinstock G.M."/>
            <person name="Rosenthal A."/>
            <person name="Cox E.C."/>
            <person name="Chisholm R.L."/>
            <person name="Gibbs R.A."/>
            <person name="Loomis W.F."/>
            <person name="Platzer M."/>
            <person name="Kay R.R."/>
            <person name="Williams J.G."/>
            <person name="Dear P.H."/>
            <person name="Noegel A.A."/>
            <person name="Barrell B.G."/>
            <person name="Kuspa A."/>
        </authorList>
    </citation>
    <scope>NUCLEOTIDE SEQUENCE [LARGE SCALE GENOMIC DNA]</scope>
    <source>
        <strain>AX4</strain>
    </source>
</reference>
<protein>
    <recommendedName>
        <fullName>Leucine--tRNA ligase, cytoplasmic</fullName>
        <ecNumber>6.1.1.4</ecNumber>
    </recommendedName>
    <alternativeName>
        <fullName>Leucyl-tRNA synthetase</fullName>
        <shortName>LeuRS</shortName>
    </alternativeName>
</protein>
<keyword id="KW-0030">Aminoacyl-tRNA synthetase</keyword>
<keyword id="KW-0067">ATP-binding</keyword>
<keyword id="KW-0963">Cytoplasm</keyword>
<keyword id="KW-0436">Ligase</keyword>
<keyword id="KW-0547">Nucleotide-binding</keyword>
<keyword id="KW-0648">Protein biosynthesis</keyword>
<keyword id="KW-1185">Reference proteome</keyword>
<proteinExistence type="inferred from homology"/>
<accession>Q54N83</accession>
<name>SYLC_DICDI</name>
<organism>
    <name type="scientific">Dictyostelium discoideum</name>
    <name type="common">Social amoeba</name>
    <dbReference type="NCBI Taxonomy" id="44689"/>
    <lineage>
        <taxon>Eukaryota</taxon>
        <taxon>Amoebozoa</taxon>
        <taxon>Evosea</taxon>
        <taxon>Eumycetozoa</taxon>
        <taxon>Dictyostelia</taxon>
        <taxon>Dictyosteliales</taxon>
        <taxon>Dictyosteliaceae</taxon>
        <taxon>Dictyostelium</taxon>
    </lineage>
</organism>